<organism>
    <name type="scientific">Saccharomyces cerevisiae (strain ATCC 204508 / S288c)</name>
    <name type="common">Baker's yeast</name>
    <dbReference type="NCBI Taxonomy" id="559292"/>
    <lineage>
        <taxon>Eukaryota</taxon>
        <taxon>Fungi</taxon>
        <taxon>Dikarya</taxon>
        <taxon>Ascomycota</taxon>
        <taxon>Saccharomycotina</taxon>
        <taxon>Saccharomycetes</taxon>
        <taxon>Saccharomycetales</taxon>
        <taxon>Saccharomycetaceae</taxon>
        <taxon>Saccharomyces</taxon>
    </lineage>
</organism>
<protein>
    <recommendedName>
        <fullName evidence="6">Adenine phosphoribosyltransferase 1</fullName>
        <shortName evidence="6">APRT 1</shortName>
        <ecNumber evidence="5">2.4.2.7</ecNumber>
    </recommendedName>
</protein>
<proteinExistence type="evidence at protein level"/>
<reference key="1">
    <citation type="journal article" date="1995" name="Gene">
        <title>Cloning and characterization of the adenine phosphoribosyltransferase-encoding gene (APT1) from Saccharomyces cerevisiae.</title>
        <authorList>
            <person name="Alfonzo J.D."/>
            <person name="Sahota A."/>
            <person name="Deeley M.C."/>
            <person name="Ranjekar P."/>
            <person name="Taylor M.W."/>
        </authorList>
    </citation>
    <scope>NUCLEOTIDE SEQUENCE [GENOMIC DNA]</scope>
    <source>
        <strain>DS1</strain>
    </source>
</reference>
<reference key="2">
    <citation type="submission" date="1996-02" db="EMBL/GenBank/DDBJ databases">
        <authorList>
            <person name="Taylor M.W."/>
            <person name="Alfonzo J.D."/>
        </authorList>
    </citation>
    <scope>SEQUENCE REVISION</scope>
</reference>
<reference key="3">
    <citation type="journal article" date="1997" name="Nature">
        <title>The nucleotide sequence of Saccharomyces cerevisiae chromosome XIII.</title>
        <authorList>
            <person name="Bowman S."/>
            <person name="Churcher C.M."/>
            <person name="Badcock K."/>
            <person name="Brown D."/>
            <person name="Chillingworth T."/>
            <person name="Connor R."/>
            <person name="Dedman K."/>
            <person name="Devlin K."/>
            <person name="Gentles S."/>
            <person name="Hamlin N."/>
            <person name="Hunt S."/>
            <person name="Jagels K."/>
            <person name="Lye G."/>
            <person name="Moule S."/>
            <person name="Odell C."/>
            <person name="Pearson D."/>
            <person name="Rajandream M.A."/>
            <person name="Rice P."/>
            <person name="Skelton J."/>
            <person name="Walsh S.V."/>
            <person name="Whitehead S."/>
            <person name="Barrell B.G."/>
        </authorList>
    </citation>
    <scope>NUCLEOTIDE SEQUENCE [LARGE SCALE GENOMIC DNA]</scope>
    <source>
        <strain>ATCC 204508 / S288c</strain>
    </source>
</reference>
<reference key="4">
    <citation type="journal article" date="2014" name="G3 (Bethesda)">
        <title>The reference genome sequence of Saccharomyces cerevisiae: Then and now.</title>
        <authorList>
            <person name="Engel S.R."/>
            <person name="Dietrich F.S."/>
            <person name="Fisk D.G."/>
            <person name="Binkley G."/>
            <person name="Balakrishnan R."/>
            <person name="Costanzo M.C."/>
            <person name="Dwight S.S."/>
            <person name="Hitz B.C."/>
            <person name="Karra K."/>
            <person name="Nash R.S."/>
            <person name="Weng S."/>
            <person name="Wong E.D."/>
            <person name="Lloyd P."/>
            <person name="Skrzypek M.S."/>
            <person name="Miyasato S.R."/>
            <person name="Simison M."/>
            <person name="Cherry J.M."/>
        </authorList>
    </citation>
    <scope>GENOME REANNOTATION</scope>
    <source>
        <strain>ATCC 204508 / S288c</strain>
    </source>
</reference>
<reference key="5">
    <citation type="journal article" date="2007" name="Genome Res.">
        <title>Approaching a complete repository of sequence-verified protein-encoding clones for Saccharomyces cerevisiae.</title>
        <authorList>
            <person name="Hu Y."/>
            <person name="Rolfs A."/>
            <person name="Bhullar B."/>
            <person name="Murthy T.V.S."/>
            <person name="Zhu C."/>
            <person name="Berger M.F."/>
            <person name="Camargo A.A."/>
            <person name="Kelley F."/>
            <person name="McCarron S."/>
            <person name="Jepson D."/>
            <person name="Richardson A."/>
            <person name="Raphael J."/>
            <person name="Moreira D."/>
            <person name="Taycher E."/>
            <person name="Zuo D."/>
            <person name="Mohr S."/>
            <person name="Kane M.F."/>
            <person name="Williamson J."/>
            <person name="Simpson A.J.G."/>
            <person name="Bulyk M.L."/>
            <person name="Harlow E."/>
            <person name="Marsischky G."/>
            <person name="Kolodner R.D."/>
            <person name="LaBaer J."/>
        </authorList>
    </citation>
    <scope>NUCLEOTIDE SEQUENCE [GENOMIC DNA]</scope>
    <source>
        <strain>ATCC 204508 / S288c</strain>
    </source>
</reference>
<reference key="6">
    <citation type="journal article" date="1997" name="Biochim. Biophys. Acta">
        <title>Purification and characterization of adenine phosphoribosyltransferase from Saccharomyces cerevisiae.</title>
        <authorList>
            <person name="Alfonzo J.D."/>
            <person name="Sahota A."/>
            <person name="Taylor M.W."/>
        </authorList>
    </citation>
    <scope>COFACTOR</scope>
    <scope>SUBUNIT</scope>
    <source>
        <strain>ATCC 24903</strain>
    </source>
</reference>
<reference key="7">
    <citation type="journal article" date="1999" name="J. Bacteriol.">
        <title>APT1, but not APT2, codes for a functional adenine phosphoribosyltransferase in Saccharomyces cerevisiae.</title>
        <authorList>
            <person name="Alfonzo J.D."/>
            <person name="Crother T.R."/>
            <person name="Guetsova M.L."/>
            <person name="Daignan-Fornier B."/>
            <person name="Taylor M.W."/>
        </authorList>
    </citation>
    <scope>FUNCTION</scope>
    <scope>CATALYTIC ACTIVITY</scope>
    <scope>SUBUNIT</scope>
</reference>
<reference key="8">
    <citation type="journal article" date="2003" name="Nature">
        <title>Global analysis of protein localization in budding yeast.</title>
        <authorList>
            <person name="Huh W.-K."/>
            <person name="Falvo J.V."/>
            <person name="Gerke L.C."/>
            <person name="Carroll A.S."/>
            <person name="Howson R.W."/>
            <person name="Weissman J.S."/>
            <person name="O'Shea E.K."/>
        </authorList>
    </citation>
    <scope>SUBCELLULAR LOCATION [LARGE SCALE ANALYSIS]</scope>
</reference>
<reference key="9">
    <citation type="journal article" date="2003" name="Nature">
        <title>Global analysis of protein expression in yeast.</title>
        <authorList>
            <person name="Ghaemmaghami S."/>
            <person name="Huh W.-K."/>
            <person name="Bower K."/>
            <person name="Howson R.W."/>
            <person name="Belle A."/>
            <person name="Dephoure N."/>
            <person name="O'Shea E.K."/>
            <person name="Weissman J.S."/>
        </authorList>
    </citation>
    <scope>LEVEL OF PROTEIN EXPRESSION [LARGE SCALE ANALYSIS]</scope>
</reference>
<reference key="10">
    <citation type="journal article" date="2008" name="Mol. Cell. Proteomics">
        <title>A multidimensional chromatography technology for in-depth phosphoproteome analysis.</title>
        <authorList>
            <person name="Albuquerque C.P."/>
            <person name="Smolka M.B."/>
            <person name="Payne S.H."/>
            <person name="Bafna V."/>
            <person name="Eng J."/>
            <person name="Zhou H."/>
        </authorList>
    </citation>
    <scope>PHOSPHORYLATION [LARGE SCALE ANALYSIS] AT SER-68</scope>
    <scope>IDENTIFICATION BY MASS SPECTROMETRY [LARGE SCALE ANALYSIS]</scope>
</reference>
<reference evidence="8 9" key="11">
    <citation type="journal article" date="2001" name="Biochemistry">
        <title>Structural analysis of adenine phosphoribosyltransferase from Saccharomyces cerevisiae.</title>
        <authorList>
            <person name="Shi W."/>
            <person name="Tanaka K.S.E."/>
            <person name="Crother T.R."/>
            <person name="Taylor M.W."/>
            <person name="Almo S.C."/>
            <person name="Schramm V.L."/>
        </authorList>
    </citation>
    <scope>X-RAY CRYSTALLOGRAPHY (1.5 ANGSTROMS) OF 3-187 OF APOENZYME AND IN COMPLEX WITH SUBSTRATE ANALOG</scope>
    <scope>HOMODIMERIZATION</scope>
    <scope>MUTAGENESIS OF ARG-69; ARG-89; LYS-90; LYS-93; TYR-103; GLU-106; TYR-107 AND GLY-108</scope>
</reference>
<reference evidence="10 11" key="12">
    <citation type="journal article" date="2018" name="ACS Chem. Biol.">
        <title>Synthesis of bis-Phosphate Iminoaltritol Enantiomers and Structural Characterization with Adenine Phosphoribosyltransferase.</title>
        <authorList>
            <person name="Harris L.D."/>
            <person name="Harijan R.K."/>
            <person name="Ducati R.G."/>
            <person name="Evans G.B."/>
            <person name="Hirsch B.M."/>
            <person name="Schramm V.L."/>
        </authorList>
    </citation>
    <scope>X-RAY CRYSTALLOGRAPHY (1.78 ANGSTROMS) OF 3-187</scope>
</reference>
<sequence length="187" mass="20587">MSIASYAQELKLALHQYPNFPSEGILFEDFLPIFRNPGLFQKLIDAFKLHLEEAFPEVKIDYIVGLESRGFLFGPTLALALGVGFVPVRKAGKLPGECFKATYEKEYGSDLFEIQKNAIPAGSNVIIVDDIIATGGSAAAAGELVEQLEANLLEYNFVMELDFLKGRSKLNAPVFTLLNAQKEALKK</sequence>
<evidence type="ECO:0000269" key="1">
    <source>
    </source>
</evidence>
<evidence type="ECO:0000269" key="2">
    <source>
    </source>
</evidence>
<evidence type="ECO:0000269" key="3">
    <source>
    </source>
</evidence>
<evidence type="ECO:0000269" key="4">
    <source>
    </source>
</evidence>
<evidence type="ECO:0000269" key="5">
    <source>
    </source>
</evidence>
<evidence type="ECO:0000303" key="6">
    <source>
    </source>
</evidence>
<evidence type="ECO:0000305" key="7"/>
<evidence type="ECO:0007744" key="8">
    <source>
        <dbReference type="PDB" id="1G2P"/>
    </source>
</evidence>
<evidence type="ECO:0007744" key="9">
    <source>
        <dbReference type="PDB" id="1G2Q"/>
    </source>
</evidence>
<evidence type="ECO:0007744" key="10">
    <source>
        <dbReference type="PDB" id="5VJN"/>
    </source>
</evidence>
<evidence type="ECO:0007744" key="11">
    <source>
        <dbReference type="PDB" id="5VJP"/>
    </source>
</evidence>
<evidence type="ECO:0007744" key="12">
    <source>
    </source>
</evidence>
<evidence type="ECO:0007829" key="13">
    <source>
        <dbReference type="PDB" id="1G2P"/>
    </source>
</evidence>
<evidence type="ECO:0007829" key="14">
    <source>
        <dbReference type="PDB" id="1G2Q"/>
    </source>
</evidence>
<gene>
    <name evidence="6" type="primary">APT1</name>
    <name type="ordered locus">YML022W</name>
</gene>
<accession>P49435</accession>
<accession>D6VZF2</accession>
<accession>Q6Q5A3</accession>
<name>APT1_YEAST</name>
<comment type="function">
    <text evidence="4 5">Catalyzes a salvage reaction resulting in the formation of AMP, that is energically less costly than de novo synthesis.</text>
</comment>
<comment type="catalytic activity">
    <reaction evidence="5">
        <text>AMP + diphosphate = 5-phospho-alpha-D-ribose 1-diphosphate + adenine</text>
        <dbReference type="Rhea" id="RHEA:16609"/>
        <dbReference type="ChEBI" id="CHEBI:16708"/>
        <dbReference type="ChEBI" id="CHEBI:33019"/>
        <dbReference type="ChEBI" id="CHEBI:58017"/>
        <dbReference type="ChEBI" id="CHEBI:456215"/>
        <dbReference type="EC" id="2.4.2.7"/>
    </reaction>
</comment>
<comment type="cofactor">
    <cofactor evidence="4">
        <name>Mg(2+)</name>
        <dbReference type="ChEBI" id="CHEBI:18420"/>
    </cofactor>
</comment>
<comment type="pathway">
    <text>Purine metabolism; AMP biosynthesis via salvage pathway; AMP from adenine: step 1/1.</text>
</comment>
<comment type="subunit">
    <text evidence="1 4 5">Homodimer.</text>
</comment>
<comment type="interaction">
    <interactant intactId="EBI-2733">
        <id>P49435</id>
    </interactant>
    <interactant intactId="EBI-2738">
        <id>P36973</id>
        <label>APT2</label>
    </interactant>
    <organismsDiffer>false</organismsDiffer>
    <experiments>2</experiments>
</comment>
<comment type="subcellular location">
    <subcellularLocation>
        <location evidence="2">Cytoplasm</location>
    </subcellularLocation>
    <subcellularLocation>
        <location evidence="2">Nucleus</location>
    </subcellularLocation>
</comment>
<comment type="miscellaneous">
    <text evidence="3">Present with 11200 molecules/cell in log phase SD medium.</text>
</comment>
<comment type="similarity">
    <text evidence="7">Belongs to the purine/pyrimidine phosphoribosyltransferase family.</text>
</comment>
<feature type="chain" id="PRO_0000149517" description="Adenine phosphoribosyltransferase 1">
    <location>
        <begin position="1"/>
        <end position="187"/>
    </location>
</feature>
<feature type="binding site" evidence="7">
    <location>
        <begin position="133"/>
        <end position="137"/>
    </location>
    <ligand>
        <name>AMP</name>
        <dbReference type="ChEBI" id="CHEBI:456215"/>
    </ligand>
</feature>
<feature type="modified residue" description="Phosphoserine" evidence="12">
    <location>
        <position position="68"/>
    </location>
</feature>
<feature type="mutagenesis site" description="4-fold decrease in activity." evidence="1">
    <original>R</original>
    <variation>A</variation>
    <location>
        <position position="69"/>
    </location>
</feature>
<feature type="mutagenesis site" description="2-fold decrease in activity." evidence="1">
    <original>R</original>
    <variation>A</variation>
    <location>
        <position position="89"/>
    </location>
</feature>
<feature type="mutagenesis site" description="30-fold decrease in activity." evidence="1">
    <original>K</original>
    <variation>A</variation>
    <location>
        <position position="90"/>
    </location>
</feature>
<feature type="mutagenesis site" description="Small increase in activity." evidence="1">
    <original>K</original>
    <variation>A</variation>
    <location>
        <position position="93"/>
    </location>
</feature>
<feature type="mutagenesis site" description="4-fold increase in activity." evidence="1">
    <original>Y</original>
    <variation>F</variation>
    <location>
        <position position="103"/>
    </location>
</feature>
<feature type="mutagenesis site" description="1 million-fold decrease in activity." evidence="1">
    <original>E</original>
    <variation>L</variation>
    <location>
        <position position="106"/>
    </location>
</feature>
<feature type="mutagenesis site" description="2-fold decrease in activity." evidence="1">
    <original>E</original>
    <variation>Q</variation>
    <location>
        <position position="106"/>
    </location>
</feature>
<feature type="mutagenesis site" description="2/3-fold decrease in activity." evidence="1">
    <original>Y</original>
    <variation>D</variation>
    <location>
        <position position="107"/>
    </location>
</feature>
<feature type="mutagenesis site" description="Small decrease in activity." evidence="1">
    <original>Y</original>
    <variation>F</variation>
    <location>
        <position position="107"/>
    </location>
</feature>
<feature type="mutagenesis site" description="Small decrease in activity." evidence="1">
    <original>G</original>
    <variation>A</variation>
    <location>
        <position position="108"/>
    </location>
</feature>
<feature type="mutagenesis site" description="2/3-fold decrease in activity." evidence="1">
    <original>G</original>
    <variation>H</variation>
    <location>
        <position position="108"/>
    </location>
</feature>
<feature type="sequence conflict" description="In Ref. 1; AAA89075." evidence="7" ref="1">
    <original>P</original>
    <variation>F</variation>
    <location>
        <position position="37"/>
    </location>
</feature>
<feature type="helix" evidence="14">
    <location>
        <begin position="2"/>
        <end position="13"/>
    </location>
</feature>
<feature type="strand" evidence="14">
    <location>
        <begin position="15"/>
        <end position="17"/>
    </location>
</feature>
<feature type="strand" evidence="14">
    <location>
        <begin position="27"/>
        <end position="29"/>
    </location>
</feature>
<feature type="helix" evidence="14">
    <location>
        <begin position="31"/>
        <end position="35"/>
    </location>
</feature>
<feature type="helix" evidence="14">
    <location>
        <begin position="37"/>
        <end position="54"/>
    </location>
</feature>
<feature type="strand" evidence="14">
    <location>
        <begin position="62"/>
        <end position="66"/>
    </location>
</feature>
<feature type="turn" evidence="14">
    <location>
        <begin position="67"/>
        <end position="69"/>
    </location>
</feature>
<feature type="helix" evidence="14">
    <location>
        <begin position="70"/>
        <end position="81"/>
    </location>
</feature>
<feature type="strand" evidence="14">
    <location>
        <begin position="84"/>
        <end position="90"/>
    </location>
</feature>
<feature type="strand" evidence="14">
    <location>
        <begin position="96"/>
        <end position="104"/>
    </location>
</feature>
<feature type="strand" evidence="14">
    <location>
        <begin position="109"/>
        <end position="115"/>
    </location>
</feature>
<feature type="strand" evidence="14">
    <location>
        <begin position="124"/>
        <end position="134"/>
    </location>
</feature>
<feature type="helix" evidence="14">
    <location>
        <begin position="136"/>
        <end position="147"/>
    </location>
</feature>
<feature type="strand" evidence="14">
    <location>
        <begin position="151"/>
        <end position="160"/>
    </location>
</feature>
<feature type="helix" evidence="13">
    <location>
        <begin position="162"/>
        <end position="164"/>
    </location>
</feature>
<feature type="helix" evidence="13">
    <location>
        <begin position="166"/>
        <end position="169"/>
    </location>
</feature>
<feature type="strand" evidence="14">
    <location>
        <begin position="174"/>
        <end position="176"/>
    </location>
</feature>
<keyword id="KW-0002">3D-structure</keyword>
<keyword id="KW-0963">Cytoplasm</keyword>
<keyword id="KW-0328">Glycosyltransferase</keyword>
<keyword id="KW-0460">Magnesium</keyword>
<keyword id="KW-0479">Metal-binding</keyword>
<keyword id="KW-0539">Nucleus</keyword>
<keyword id="KW-0597">Phosphoprotein</keyword>
<keyword id="KW-0660">Purine salvage</keyword>
<keyword id="KW-1185">Reference proteome</keyword>
<keyword id="KW-0808">Transferase</keyword>
<dbReference type="EC" id="2.4.2.7" evidence="5"/>
<dbReference type="EMBL" id="U16781">
    <property type="protein sequence ID" value="AAA89075.1"/>
    <property type="molecule type" value="Genomic_DNA"/>
</dbReference>
<dbReference type="EMBL" id="Z46659">
    <property type="protein sequence ID" value="CAA86633.1"/>
    <property type="molecule type" value="Genomic_DNA"/>
</dbReference>
<dbReference type="EMBL" id="AY558232">
    <property type="protein sequence ID" value="AAS56558.1"/>
    <property type="molecule type" value="Genomic_DNA"/>
</dbReference>
<dbReference type="EMBL" id="BK006946">
    <property type="protein sequence ID" value="DAA09876.1"/>
    <property type="molecule type" value="Genomic_DNA"/>
</dbReference>
<dbReference type="PIR" id="S49755">
    <property type="entry name" value="S49755"/>
</dbReference>
<dbReference type="RefSeq" id="NP_013690.1">
    <property type="nucleotide sequence ID" value="NM_001182380.1"/>
</dbReference>
<dbReference type="PDB" id="1G2P">
    <property type="method" value="X-ray"/>
    <property type="resolution" value="1.75 A"/>
    <property type="chains" value="A=1-187"/>
</dbReference>
<dbReference type="PDB" id="1G2Q">
    <property type="method" value="X-ray"/>
    <property type="resolution" value="1.50 A"/>
    <property type="chains" value="A/B=1-187"/>
</dbReference>
<dbReference type="PDB" id="5VJN">
    <property type="method" value="X-ray"/>
    <property type="resolution" value="1.78 A"/>
    <property type="chains" value="A/B=3-187"/>
</dbReference>
<dbReference type="PDB" id="5VJP">
    <property type="method" value="X-ray"/>
    <property type="resolution" value="1.98 A"/>
    <property type="chains" value="A/B=3-187"/>
</dbReference>
<dbReference type="PDBsum" id="1G2P"/>
<dbReference type="PDBsum" id="1G2Q"/>
<dbReference type="PDBsum" id="5VJN"/>
<dbReference type="PDBsum" id="5VJP"/>
<dbReference type="SMR" id="P49435"/>
<dbReference type="BioGRID" id="35147">
    <property type="interactions" value="70"/>
</dbReference>
<dbReference type="DIP" id="DIP-2057N"/>
<dbReference type="FunCoup" id="P49435">
    <property type="interactions" value="739"/>
</dbReference>
<dbReference type="IntAct" id="P49435">
    <property type="interactions" value="4"/>
</dbReference>
<dbReference type="STRING" id="4932.YML022W"/>
<dbReference type="iPTMnet" id="P49435"/>
<dbReference type="PaxDb" id="4932-YML022W"/>
<dbReference type="PeptideAtlas" id="P49435"/>
<dbReference type="TopDownProteomics" id="P49435"/>
<dbReference type="EnsemblFungi" id="YML022W_mRNA">
    <property type="protein sequence ID" value="YML022W"/>
    <property type="gene ID" value="YML022W"/>
</dbReference>
<dbReference type="GeneID" id="854986"/>
<dbReference type="KEGG" id="sce:YML022W"/>
<dbReference type="AGR" id="SGD:S000004484"/>
<dbReference type="SGD" id="S000004484">
    <property type="gene designation" value="APT1"/>
</dbReference>
<dbReference type="VEuPathDB" id="FungiDB:YML022W"/>
<dbReference type="eggNOG" id="KOG1712">
    <property type="taxonomic scope" value="Eukaryota"/>
</dbReference>
<dbReference type="GeneTree" id="ENSGT00940000176759"/>
<dbReference type="HOGENOM" id="CLU_063339_1_0_1"/>
<dbReference type="InParanoid" id="P49435"/>
<dbReference type="OMA" id="ITHFVYH"/>
<dbReference type="OrthoDB" id="363185at2759"/>
<dbReference type="BioCyc" id="MetaCyc:YML022W-MONOMER"/>
<dbReference type="BioCyc" id="YEAST:YML022W-MONOMER"/>
<dbReference type="BRENDA" id="2.4.2.7">
    <property type="organism ID" value="984"/>
</dbReference>
<dbReference type="Reactome" id="R-SCE-6798695">
    <property type="pathway name" value="Neutrophil degranulation"/>
</dbReference>
<dbReference type="Reactome" id="R-SCE-74217">
    <property type="pathway name" value="Purine salvage"/>
</dbReference>
<dbReference type="UniPathway" id="UPA00588">
    <property type="reaction ID" value="UER00646"/>
</dbReference>
<dbReference type="BioGRID-ORCS" id="854986">
    <property type="hits" value="1 hit in 10 CRISPR screens"/>
</dbReference>
<dbReference type="EvolutionaryTrace" id="P49435"/>
<dbReference type="PRO" id="PR:P49435"/>
<dbReference type="Proteomes" id="UP000002311">
    <property type="component" value="Chromosome XIII"/>
</dbReference>
<dbReference type="RNAct" id="P49435">
    <property type="molecule type" value="protein"/>
</dbReference>
<dbReference type="GO" id="GO:0005737">
    <property type="term" value="C:cytoplasm"/>
    <property type="evidence" value="ECO:0007005"/>
    <property type="project" value="SGD"/>
</dbReference>
<dbReference type="GO" id="GO:0005634">
    <property type="term" value="C:nucleus"/>
    <property type="evidence" value="ECO:0007005"/>
    <property type="project" value="SGD"/>
</dbReference>
<dbReference type="GO" id="GO:0002055">
    <property type="term" value="F:adenine binding"/>
    <property type="evidence" value="ECO:0000318"/>
    <property type="project" value="GO_Central"/>
</dbReference>
<dbReference type="GO" id="GO:0003999">
    <property type="term" value="F:adenine phosphoribosyltransferase activity"/>
    <property type="evidence" value="ECO:0000314"/>
    <property type="project" value="SGD"/>
</dbReference>
<dbReference type="GO" id="GO:0016208">
    <property type="term" value="F:AMP binding"/>
    <property type="evidence" value="ECO:0000318"/>
    <property type="project" value="GO_Central"/>
</dbReference>
<dbReference type="GO" id="GO:0046872">
    <property type="term" value="F:metal ion binding"/>
    <property type="evidence" value="ECO:0007669"/>
    <property type="project" value="UniProtKB-KW"/>
</dbReference>
<dbReference type="GO" id="GO:0006168">
    <property type="term" value="P:adenine salvage"/>
    <property type="evidence" value="ECO:0000315"/>
    <property type="project" value="SGD"/>
</dbReference>
<dbReference type="GO" id="GO:0044209">
    <property type="term" value="P:AMP salvage"/>
    <property type="evidence" value="ECO:0000318"/>
    <property type="project" value="GO_Central"/>
</dbReference>
<dbReference type="GO" id="GO:0006166">
    <property type="term" value="P:purine ribonucleoside salvage"/>
    <property type="evidence" value="ECO:0007669"/>
    <property type="project" value="UniProtKB-KW"/>
</dbReference>
<dbReference type="CDD" id="cd06223">
    <property type="entry name" value="PRTases_typeI"/>
    <property type="match status" value="1"/>
</dbReference>
<dbReference type="FunFam" id="3.40.50.2020:FF:000004">
    <property type="entry name" value="Adenine phosphoribosyltransferase"/>
    <property type="match status" value="1"/>
</dbReference>
<dbReference type="Gene3D" id="3.40.50.2020">
    <property type="match status" value="1"/>
</dbReference>
<dbReference type="HAMAP" id="MF_00004">
    <property type="entry name" value="Aden_phosphoribosyltr"/>
    <property type="match status" value="1"/>
</dbReference>
<dbReference type="InterPro" id="IPR005764">
    <property type="entry name" value="Ade_phspho_trans"/>
</dbReference>
<dbReference type="InterPro" id="IPR000836">
    <property type="entry name" value="PRibTrfase_dom"/>
</dbReference>
<dbReference type="InterPro" id="IPR029057">
    <property type="entry name" value="PRTase-like"/>
</dbReference>
<dbReference type="InterPro" id="IPR050054">
    <property type="entry name" value="UPRTase/APRTase"/>
</dbReference>
<dbReference type="NCBIfam" id="TIGR01090">
    <property type="entry name" value="apt"/>
    <property type="match status" value="1"/>
</dbReference>
<dbReference type="NCBIfam" id="NF002636">
    <property type="entry name" value="PRK02304.1-5"/>
    <property type="match status" value="1"/>
</dbReference>
<dbReference type="PANTHER" id="PTHR32315">
    <property type="entry name" value="ADENINE PHOSPHORIBOSYLTRANSFERASE"/>
    <property type="match status" value="1"/>
</dbReference>
<dbReference type="PANTHER" id="PTHR32315:SF3">
    <property type="entry name" value="ADENINE PHOSPHORIBOSYLTRANSFERASE"/>
    <property type="match status" value="1"/>
</dbReference>
<dbReference type="Pfam" id="PF00156">
    <property type="entry name" value="Pribosyltran"/>
    <property type="match status" value="1"/>
</dbReference>
<dbReference type="SUPFAM" id="SSF53271">
    <property type="entry name" value="PRTase-like"/>
    <property type="match status" value="1"/>
</dbReference>
<dbReference type="PROSITE" id="PS00103">
    <property type="entry name" value="PUR_PYR_PR_TRANSFER"/>
    <property type="match status" value="1"/>
</dbReference>